<reference key="1">
    <citation type="journal article" date="2009" name="PLoS Genet.">
        <title>Organised genome dynamics in the Escherichia coli species results in highly diverse adaptive paths.</title>
        <authorList>
            <person name="Touchon M."/>
            <person name="Hoede C."/>
            <person name="Tenaillon O."/>
            <person name="Barbe V."/>
            <person name="Baeriswyl S."/>
            <person name="Bidet P."/>
            <person name="Bingen E."/>
            <person name="Bonacorsi S."/>
            <person name="Bouchier C."/>
            <person name="Bouvet O."/>
            <person name="Calteau A."/>
            <person name="Chiapello H."/>
            <person name="Clermont O."/>
            <person name="Cruveiller S."/>
            <person name="Danchin A."/>
            <person name="Diard M."/>
            <person name="Dossat C."/>
            <person name="Karoui M.E."/>
            <person name="Frapy E."/>
            <person name="Garry L."/>
            <person name="Ghigo J.M."/>
            <person name="Gilles A.M."/>
            <person name="Johnson J."/>
            <person name="Le Bouguenec C."/>
            <person name="Lescat M."/>
            <person name="Mangenot S."/>
            <person name="Martinez-Jehanne V."/>
            <person name="Matic I."/>
            <person name="Nassif X."/>
            <person name="Oztas S."/>
            <person name="Petit M.A."/>
            <person name="Pichon C."/>
            <person name="Rouy Z."/>
            <person name="Ruf C.S."/>
            <person name="Schneider D."/>
            <person name="Tourret J."/>
            <person name="Vacherie B."/>
            <person name="Vallenet D."/>
            <person name="Medigue C."/>
            <person name="Rocha E.P.C."/>
            <person name="Denamur E."/>
        </authorList>
    </citation>
    <scope>NUCLEOTIDE SEQUENCE [LARGE SCALE GENOMIC DNA]</scope>
    <source>
        <strain>ATCC 35469 / DSM 13698 / BCRC 15582 / CCUG 18766 / IAM 14443 / JCM 21226 / LMG 7866 / NBRC 102419 / NCTC 12128 / CDC 0568-73</strain>
    </source>
</reference>
<proteinExistence type="inferred from homology"/>
<sequence length="184" mass="20958">MMSQPAKVLLLYAHPESQDSVANRVLLKPATQLSNVTVHDLYAHYPDFFIDIPREQALLREHEVIVFQHPLYTYSCPALLKEWLDRVLSRGFASGPGGNQLAGKYWRSVITTGEPESAYRYDALNRYPMSDVLRPFELAAGMCRMHWLSPIIIYWARRQSAQELASHARAYGDWLANPLSPGGR</sequence>
<protein>
    <recommendedName>
        <fullName evidence="1">Glutathione-regulated potassium-efflux system ancillary protein KefG</fullName>
    </recommendedName>
    <alternativeName>
        <fullName evidence="1">Putative quinone oxidoreductase KefG</fullName>
        <ecNumber evidence="1">1.6.5.2</ecNumber>
    </alternativeName>
</protein>
<keyword id="KW-0997">Cell inner membrane</keyword>
<keyword id="KW-1003">Cell membrane</keyword>
<keyword id="KW-0472">Membrane</keyword>
<keyword id="KW-0520">NAD</keyword>
<keyword id="KW-0560">Oxidoreductase</keyword>
<gene>
    <name evidence="1" type="primary">kefG</name>
    <name type="ordered locus">EFER_3322</name>
</gene>
<organism>
    <name type="scientific">Escherichia fergusonii (strain ATCC 35469 / DSM 13698 / CCUG 18766 / IAM 14443 / JCM 21226 / LMG 7866 / NBRC 102419 / NCTC 12128 / CDC 0568-73)</name>
    <dbReference type="NCBI Taxonomy" id="585054"/>
    <lineage>
        <taxon>Bacteria</taxon>
        <taxon>Pseudomonadati</taxon>
        <taxon>Pseudomonadota</taxon>
        <taxon>Gammaproteobacteria</taxon>
        <taxon>Enterobacterales</taxon>
        <taxon>Enterobacteriaceae</taxon>
        <taxon>Escherichia</taxon>
    </lineage>
</organism>
<feature type="chain" id="PRO_1000145580" description="Glutathione-regulated potassium-efflux system ancillary protein KefG">
    <location>
        <begin position="1"/>
        <end position="184"/>
    </location>
</feature>
<name>KEFG_ESCF3</name>
<dbReference type="EC" id="1.6.5.2" evidence="1"/>
<dbReference type="EMBL" id="CU928158">
    <property type="protein sequence ID" value="CAQ90801.1"/>
    <property type="molecule type" value="Genomic_DNA"/>
</dbReference>
<dbReference type="SMR" id="B7LS58"/>
<dbReference type="KEGG" id="efe:EFER_3322"/>
<dbReference type="HOGENOM" id="CLU_058643_0_1_6"/>
<dbReference type="Proteomes" id="UP000000745">
    <property type="component" value="Chromosome"/>
</dbReference>
<dbReference type="GO" id="GO:0005886">
    <property type="term" value="C:plasma membrane"/>
    <property type="evidence" value="ECO:0007669"/>
    <property type="project" value="UniProtKB-SubCell"/>
</dbReference>
<dbReference type="GO" id="GO:0009055">
    <property type="term" value="F:electron transfer activity"/>
    <property type="evidence" value="ECO:0007669"/>
    <property type="project" value="TreeGrafter"/>
</dbReference>
<dbReference type="GO" id="GO:0010181">
    <property type="term" value="F:FMN binding"/>
    <property type="evidence" value="ECO:0007669"/>
    <property type="project" value="TreeGrafter"/>
</dbReference>
<dbReference type="GO" id="GO:0050136">
    <property type="term" value="F:NADH:ubiquinone reductase (non-electrogenic) activity"/>
    <property type="evidence" value="ECO:0007669"/>
    <property type="project" value="RHEA"/>
</dbReference>
<dbReference type="GO" id="GO:0008753">
    <property type="term" value="F:NADPH dehydrogenase (quinone) activity"/>
    <property type="evidence" value="ECO:0007669"/>
    <property type="project" value="RHEA"/>
</dbReference>
<dbReference type="GO" id="GO:1901381">
    <property type="term" value="P:positive regulation of potassium ion transmembrane transport"/>
    <property type="evidence" value="ECO:0007669"/>
    <property type="project" value="UniProtKB-UniRule"/>
</dbReference>
<dbReference type="GO" id="GO:0006813">
    <property type="term" value="P:potassium ion transport"/>
    <property type="evidence" value="ECO:0007669"/>
    <property type="project" value="InterPro"/>
</dbReference>
<dbReference type="FunFam" id="3.40.50.360:FF:000013">
    <property type="entry name" value="Glutathione-regulated potassium-efflux system ancillary protein KefG"/>
    <property type="match status" value="1"/>
</dbReference>
<dbReference type="Gene3D" id="3.40.50.360">
    <property type="match status" value="1"/>
</dbReference>
<dbReference type="HAMAP" id="MF_01415">
    <property type="entry name" value="K_H_efflux_KefG"/>
    <property type="match status" value="1"/>
</dbReference>
<dbReference type="InterPro" id="IPR003680">
    <property type="entry name" value="Flavodoxin_fold"/>
</dbReference>
<dbReference type="InterPro" id="IPR029039">
    <property type="entry name" value="Flavoprotein-like_sf"/>
</dbReference>
<dbReference type="InterPro" id="IPR023947">
    <property type="entry name" value="K_H_efflux_KefG"/>
</dbReference>
<dbReference type="InterPro" id="IPR046980">
    <property type="entry name" value="KefG/KefF"/>
</dbReference>
<dbReference type="NCBIfam" id="NF003430">
    <property type="entry name" value="PRK04930.1"/>
    <property type="match status" value="1"/>
</dbReference>
<dbReference type="PANTHER" id="PTHR47307">
    <property type="entry name" value="GLUTATHIONE-REGULATED POTASSIUM-EFFLUX SYSTEM ANCILLARY PROTEIN KEFG"/>
    <property type="match status" value="1"/>
</dbReference>
<dbReference type="PANTHER" id="PTHR47307:SF1">
    <property type="entry name" value="GLUTATHIONE-REGULATED POTASSIUM-EFFLUX SYSTEM ANCILLARY PROTEIN KEFG"/>
    <property type="match status" value="1"/>
</dbReference>
<dbReference type="Pfam" id="PF02525">
    <property type="entry name" value="Flavodoxin_2"/>
    <property type="match status" value="1"/>
</dbReference>
<dbReference type="SUPFAM" id="SSF52218">
    <property type="entry name" value="Flavoproteins"/>
    <property type="match status" value="1"/>
</dbReference>
<accession>B7LS58</accession>
<evidence type="ECO:0000255" key="1">
    <source>
        <dbReference type="HAMAP-Rule" id="MF_01415"/>
    </source>
</evidence>
<comment type="function">
    <text evidence="1">Regulatory subunit of a potassium efflux system that confers protection against electrophiles. Required for full activity of KefB.</text>
</comment>
<comment type="catalytic activity">
    <reaction evidence="1">
        <text>a quinone + NADH + H(+) = a quinol + NAD(+)</text>
        <dbReference type="Rhea" id="RHEA:46160"/>
        <dbReference type="ChEBI" id="CHEBI:15378"/>
        <dbReference type="ChEBI" id="CHEBI:24646"/>
        <dbReference type="ChEBI" id="CHEBI:57540"/>
        <dbReference type="ChEBI" id="CHEBI:57945"/>
        <dbReference type="ChEBI" id="CHEBI:132124"/>
        <dbReference type="EC" id="1.6.5.2"/>
    </reaction>
</comment>
<comment type="catalytic activity">
    <reaction evidence="1">
        <text>a quinone + NADPH + H(+) = a quinol + NADP(+)</text>
        <dbReference type="Rhea" id="RHEA:46164"/>
        <dbReference type="ChEBI" id="CHEBI:15378"/>
        <dbReference type="ChEBI" id="CHEBI:24646"/>
        <dbReference type="ChEBI" id="CHEBI:57783"/>
        <dbReference type="ChEBI" id="CHEBI:58349"/>
        <dbReference type="ChEBI" id="CHEBI:132124"/>
        <dbReference type="EC" id="1.6.5.2"/>
    </reaction>
</comment>
<comment type="subunit">
    <text evidence="1">Interacts with KefB.</text>
</comment>
<comment type="subcellular location">
    <subcellularLocation>
        <location evidence="1">Cell inner membrane</location>
        <topology evidence="1">Peripheral membrane protein</topology>
        <orientation evidence="1">Cytoplasmic side</orientation>
    </subcellularLocation>
</comment>
<comment type="similarity">
    <text evidence="1">Belongs to the NAD(P)H dehydrogenase (quinone) family. KefG subfamily.</text>
</comment>